<gene>
    <name type="ordered locus">Caur_3581</name>
</gene>
<evidence type="ECO:0000255" key="1">
    <source>
        <dbReference type="HAMAP-Rule" id="MF_01609"/>
    </source>
</evidence>
<organism>
    <name type="scientific">Chloroflexus aurantiacus (strain ATCC 29366 / DSM 635 / J-10-fl)</name>
    <dbReference type="NCBI Taxonomy" id="324602"/>
    <lineage>
        <taxon>Bacteria</taxon>
        <taxon>Bacillati</taxon>
        <taxon>Chloroflexota</taxon>
        <taxon>Chloroflexia</taxon>
        <taxon>Chloroflexales</taxon>
        <taxon>Chloroflexineae</taxon>
        <taxon>Chloroflexaceae</taxon>
        <taxon>Chloroflexus</taxon>
    </lineage>
</organism>
<protein>
    <recommendedName>
        <fullName evidence="1">Putative glutamate--cysteine ligase 2</fullName>
        <ecNumber evidence="1">6.3.2.2</ecNumber>
    </recommendedName>
    <alternativeName>
        <fullName evidence="1">Gamma-glutamylcysteine synthetase 2</fullName>
        <shortName evidence="1">GCS 2</shortName>
        <shortName evidence="1">Gamma-GCS 2</shortName>
    </alternativeName>
</protein>
<sequence length="390" mass="44492">MSVYNPNDADFAFTLGIEEEYQIVDPETRELRSYITQILEPGRTILREQIKPEMHQSIVEVGTRPCRTISEARAEIVRLRSAIAGLAARHNLRIVAAGTHPFSSWMQQEITPDERYHMVVGEMQDAALQLLIFGMHCHIGMPNNEVAIELMNVARYICPHLLALSTSSPFWMGRNTGFKSYRSVIFSTFPRTGIPPTFHSASEFERYVQLLVNTGCIDNGKKIWWDLRPHPFFGTLEFRVCDIATKVEECLALAATMQALIVKFYTMFEENTTFRVYRRALINENKWRAQRWGLDGKLIDFGKRKEVEAKALVHEIVELVDDVVDMLGSRREVEYLLKIVENGTSADRQLRVFAETNDLKAVVDNLMVETMEGVPAMAFEADVQSQAAHS</sequence>
<name>GCS2_CHLAA</name>
<feature type="chain" id="PRO_0000337696" description="Putative glutamate--cysteine ligase 2">
    <location>
        <begin position="1"/>
        <end position="390"/>
    </location>
</feature>
<comment type="function">
    <text evidence="1">ATP-dependent carboxylate-amine ligase which exhibits weak glutamate--cysteine ligase activity.</text>
</comment>
<comment type="catalytic activity">
    <reaction evidence="1">
        <text>L-cysteine + L-glutamate + ATP = gamma-L-glutamyl-L-cysteine + ADP + phosphate + H(+)</text>
        <dbReference type="Rhea" id="RHEA:13285"/>
        <dbReference type="ChEBI" id="CHEBI:15378"/>
        <dbReference type="ChEBI" id="CHEBI:29985"/>
        <dbReference type="ChEBI" id="CHEBI:30616"/>
        <dbReference type="ChEBI" id="CHEBI:35235"/>
        <dbReference type="ChEBI" id="CHEBI:43474"/>
        <dbReference type="ChEBI" id="CHEBI:58173"/>
        <dbReference type="ChEBI" id="CHEBI:456216"/>
        <dbReference type="EC" id="6.3.2.2"/>
    </reaction>
</comment>
<comment type="similarity">
    <text evidence="1">Belongs to the glutamate--cysteine ligase type 2 family. YbdK subfamily.</text>
</comment>
<proteinExistence type="inferred from homology"/>
<accession>A9WAH5</accession>
<dbReference type="EC" id="6.3.2.2" evidence="1"/>
<dbReference type="EMBL" id="CP000909">
    <property type="protein sequence ID" value="ABY36765.1"/>
    <property type="molecule type" value="Genomic_DNA"/>
</dbReference>
<dbReference type="RefSeq" id="WP_012259418.1">
    <property type="nucleotide sequence ID" value="NC_010175.1"/>
</dbReference>
<dbReference type="RefSeq" id="YP_001637154.1">
    <property type="nucleotide sequence ID" value="NC_010175.1"/>
</dbReference>
<dbReference type="SMR" id="A9WAH5"/>
<dbReference type="STRING" id="324602.Caur_3581"/>
<dbReference type="EnsemblBacteria" id="ABY36765">
    <property type="protein sequence ID" value="ABY36765"/>
    <property type="gene ID" value="Caur_3581"/>
</dbReference>
<dbReference type="KEGG" id="cau:Caur_3581"/>
<dbReference type="PATRIC" id="fig|324602.8.peg.4032"/>
<dbReference type="eggNOG" id="COG2170">
    <property type="taxonomic scope" value="Bacteria"/>
</dbReference>
<dbReference type="HOGENOM" id="CLU_044848_1_0_0"/>
<dbReference type="InParanoid" id="A9WAH5"/>
<dbReference type="Proteomes" id="UP000002008">
    <property type="component" value="Chromosome"/>
</dbReference>
<dbReference type="GO" id="GO:0005524">
    <property type="term" value="F:ATP binding"/>
    <property type="evidence" value="ECO:0007669"/>
    <property type="project" value="UniProtKB-KW"/>
</dbReference>
<dbReference type="GO" id="GO:0004357">
    <property type="term" value="F:glutamate-cysteine ligase activity"/>
    <property type="evidence" value="ECO:0007669"/>
    <property type="project" value="UniProtKB-EC"/>
</dbReference>
<dbReference type="GO" id="GO:0016879">
    <property type="term" value="F:ligase activity, forming carbon-nitrogen bonds"/>
    <property type="evidence" value="ECO:0000318"/>
    <property type="project" value="GO_Central"/>
</dbReference>
<dbReference type="GO" id="GO:0042398">
    <property type="term" value="P:modified amino acid biosynthetic process"/>
    <property type="evidence" value="ECO:0007669"/>
    <property type="project" value="InterPro"/>
</dbReference>
<dbReference type="FunFam" id="3.30.590.20:FF:000012">
    <property type="entry name" value="Putative glutamate--cysteine ligase 2"/>
    <property type="match status" value="1"/>
</dbReference>
<dbReference type="Gene3D" id="3.30.590.20">
    <property type="match status" value="1"/>
</dbReference>
<dbReference type="HAMAP" id="MF_01609">
    <property type="entry name" value="Glu_cys_ligase_2"/>
    <property type="match status" value="1"/>
</dbReference>
<dbReference type="InterPro" id="IPR050141">
    <property type="entry name" value="GCL_type2/YbdK_subfam"/>
</dbReference>
<dbReference type="InterPro" id="IPR006336">
    <property type="entry name" value="GCS2"/>
</dbReference>
<dbReference type="InterPro" id="IPR014746">
    <property type="entry name" value="Gln_synth/guanido_kin_cat_dom"/>
</dbReference>
<dbReference type="InterPro" id="IPR011793">
    <property type="entry name" value="YbdK"/>
</dbReference>
<dbReference type="NCBIfam" id="TIGR02050">
    <property type="entry name" value="gshA_cyan_rel"/>
    <property type="match status" value="1"/>
</dbReference>
<dbReference type="NCBIfam" id="NF010039">
    <property type="entry name" value="PRK13515.1"/>
    <property type="match status" value="1"/>
</dbReference>
<dbReference type="PANTHER" id="PTHR36510">
    <property type="entry name" value="GLUTAMATE--CYSTEINE LIGASE 2-RELATED"/>
    <property type="match status" value="1"/>
</dbReference>
<dbReference type="PANTHER" id="PTHR36510:SF1">
    <property type="entry name" value="GLUTAMATE--CYSTEINE LIGASE 2-RELATED"/>
    <property type="match status" value="1"/>
</dbReference>
<dbReference type="Pfam" id="PF04107">
    <property type="entry name" value="GCS2"/>
    <property type="match status" value="1"/>
</dbReference>
<dbReference type="SUPFAM" id="SSF55931">
    <property type="entry name" value="Glutamine synthetase/guanido kinase"/>
    <property type="match status" value="1"/>
</dbReference>
<reference key="1">
    <citation type="journal article" date="2011" name="BMC Genomics">
        <title>Complete genome sequence of the filamentous anoxygenic phototrophic bacterium Chloroflexus aurantiacus.</title>
        <authorList>
            <person name="Tang K.H."/>
            <person name="Barry K."/>
            <person name="Chertkov O."/>
            <person name="Dalin E."/>
            <person name="Han C.S."/>
            <person name="Hauser L.J."/>
            <person name="Honchak B.M."/>
            <person name="Karbach L.E."/>
            <person name="Land M.L."/>
            <person name="Lapidus A."/>
            <person name="Larimer F.W."/>
            <person name="Mikhailova N."/>
            <person name="Pitluck S."/>
            <person name="Pierson B.K."/>
            <person name="Blankenship R.E."/>
        </authorList>
    </citation>
    <scope>NUCLEOTIDE SEQUENCE [LARGE SCALE GENOMIC DNA]</scope>
    <source>
        <strain>ATCC 29366 / DSM 635 / J-10-fl</strain>
    </source>
</reference>
<keyword id="KW-0067">ATP-binding</keyword>
<keyword id="KW-0436">Ligase</keyword>
<keyword id="KW-0547">Nucleotide-binding</keyword>
<keyword id="KW-1185">Reference proteome</keyword>